<reference key="1">
    <citation type="journal article" date="2007" name="PLoS ONE">
        <title>Analysis of the neurotoxin complex genes in Clostridium botulinum A1-A4 and B1 strains: BoNT/A3, /Ba4 and /B1 clusters are located within plasmids.</title>
        <authorList>
            <person name="Smith T.J."/>
            <person name="Hill K.K."/>
            <person name="Foley B.T."/>
            <person name="Detter J.C."/>
            <person name="Munk A.C."/>
            <person name="Bruce D.C."/>
            <person name="Doggett N.A."/>
            <person name="Smith L.A."/>
            <person name="Marks J.D."/>
            <person name="Xie G."/>
            <person name="Brettin T.S."/>
        </authorList>
    </citation>
    <scope>NUCLEOTIDE SEQUENCE [LARGE SCALE GENOMIC DNA]</scope>
    <source>
        <strain>ATCC 19397 / Type A</strain>
    </source>
</reference>
<accession>A7FZ94</accession>
<protein>
    <recommendedName>
        <fullName evidence="1">2-C-methyl-D-erythritol 4-phosphate cytidylyltransferase</fullName>
        <ecNumber evidence="1">2.7.7.60</ecNumber>
    </recommendedName>
    <alternativeName>
        <fullName evidence="1">4-diphosphocytidyl-2C-methyl-D-erythritol synthase</fullName>
    </alternativeName>
    <alternativeName>
        <fullName evidence="1">MEP cytidylyltransferase</fullName>
        <shortName evidence="1">MCT</shortName>
    </alternativeName>
</protein>
<comment type="function">
    <text evidence="1">Catalyzes the formation of 4-diphosphocytidyl-2-C-methyl-D-erythritol from CTP and 2-C-methyl-D-erythritol 4-phosphate (MEP).</text>
</comment>
<comment type="catalytic activity">
    <reaction evidence="1">
        <text>2-C-methyl-D-erythritol 4-phosphate + CTP + H(+) = 4-CDP-2-C-methyl-D-erythritol + diphosphate</text>
        <dbReference type="Rhea" id="RHEA:13429"/>
        <dbReference type="ChEBI" id="CHEBI:15378"/>
        <dbReference type="ChEBI" id="CHEBI:33019"/>
        <dbReference type="ChEBI" id="CHEBI:37563"/>
        <dbReference type="ChEBI" id="CHEBI:57823"/>
        <dbReference type="ChEBI" id="CHEBI:58262"/>
        <dbReference type="EC" id="2.7.7.60"/>
    </reaction>
</comment>
<comment type="pathway">
    <text evidence="1">Isoprenoid biosynthesis; isopentenyl diphosphate biosynthesis via DXP pathway; isopentenyl diphosphate from 1-deoxy-D-xylulose 5-phosphate: step 2/6.</text>
</comment>
<comment type="similarity">
    <text evidence="1">Belongs to the IspD/TarI cytidylyltransferase family. IspD subfamily.</text>
</comment>
<keyword id="KW-0414">Isoprene biosynthesis</keyword>
<keyword id="KW-0548">Nucleotidyltransferase</keyword>
<keyword id="KW-0808">Transferase</keyword>
<proteinExistence type="inferred from homology"/>
<feature type="chain" id="PRO_1000022914" description="2-C-methyl-D-erythritol 4-phosphate cytidylyltransferase">
    <location>
        <begin position="1"/>
        <end position="229"/>
    </location>
</feature>
<feature type="site" description="Transition state stabilizer" evidence="1">
    <location>
        <position position="16"/>
    </location>
</feature>
<feature type="site" description="Transition state stabilizer" evidence="1">
    <location>
        <position position="23"/>
    </location>
</feature>
<feature type="site" description="Positions MEP for the nucleophilic attack" evidence="1">
    <location>
        <position position="155"/>
    </location>
</feature>
<feature type="site" description="Positions MEP for the nucleophilic attack" evidence="1">
    <location>
        <position position="211"/>
    </location>
</feature>
<name>ISPD_CLOB1</name>
<sequence length="229" mass="25760">MSKNSVIIVAAGKGKRMNSSISKQFLQIKNKPILYYTLSKFSTHESIDEIVLVTLEDKIEVCSDIIDKYNINKVSKIVPGGKERQDSVYNGLKGVSKDCEVVLIHDAARPFVTSDIIENGIRYTNQYGAAACGVIPKDTIKIKNEKGFAIDTPNREDLFIVQTPQCFNYNIILSCHEKLKKHNKKVTDDTMVLENYGKSVYLYEGSYSNIKITTPEDLILGEQILEKLT</sequence>
<gene>
    <name evidence="1" type="primary">ispD</name>
    <name type="ordered locus">CLB_3564</name>
</gene>
<dbReference type="EC" id="2.7.7.60" evidence="1"/>
<dbReference type="EMBL" id="CP000726">
    <property type="protein sequence ID" value="ABS34447.1"/>
    <property type="molecule type" value="Genomic_DNA"/>
</dbReference>
<dbReference type="RefSeq" id="WP_012048363.1">
    <property type="nucleotide sequence ID" value="NC_009697.1"/>
</dbReference>
<dbReference type="SMR" id="A7FZ94"/>
<dbReference type="GeneID" id="5187748"/>
<dbReference type="KEGG" id="cba:CLB_3564"/>
<dbReference type="HOGENOM" id="CLU_061281_2_2_9"/>
<dbReference type="UniPathway" id="UPA00056">
    <property type="reaction ID" value="UER00093"/>
</dbReference>
<dbReference type="GO" id="GO:0050518">
    <property type="term" value="F:2-C-methyl-D-erythritol 4-phosphate cytidylyltransferase activity"/>
    <property type="evidence" value="ECO:0007669"/>
    <property type="project" value="UniProtKB-UniRule"/>
</dbReference>
<dbReference type="GO" id="GO:0019288">
    <property type="term" value="P:isopentenyl diphosphate biosynthetic process, methylerythritol 4-phosphate pathway"/>
    <property type="evidence" value="ECO:0007669"/>
    <property type="project" value="UniProtKB-UniRule"/>
</dbReference>
<dbReference type="CDD" id="cd02516">
    <property type="entry name" value="CDP-ME_synthetase"/>
    <property type="match status" value="1"/>
</dbReference>
<dbReference type="FunFam" id="3.90.550.10:FF:000003">
    <property type="entry name" value="2-C-methyl-D-erythritol 4-phosphate cytidylyltransferase"/>
    <property type="match status" value="1"/>
</dbReference>
<dbReference type="Gene3D" id="3.90.550.10">
    <property type="entry name" value="Spore Coat Polysaccharide Biosynthesis Protein SpsA, Chain A"/>
    <property type="match status" value="1"/>
</dbReference>
<dbReference type="HAMAP" id="MF_00108">
    <property type="entry name" value="IspD"/>
    <property type="match status" value="1"/>
</dbReference>
<dbReference type="InterPro" id="IPR001228">
    <property type="entry name" value="IspD"/>
</dbReference>
<dbReference type="InterPro" id="IPR034683">
    <property type="entry name" value="IspD/TarI"/>
</dbReference>
<dbReference type="InterPro" id="IPR050088">
    <property type="entry name" value="IspD/TarI_cytidylyltransf_bact"/>
</dbReference>
<dbReference type="InterPro" id="IPR018294">
    <property type="entry name" value="ISPD_synthase_CS"/>
</dbReference>
<dbReference type="InterPro" id="IPR029044">
    <property type="entry name" value="Nucleotide-diphossugar_trans"/>
</dbReference>
<dbReference type="NCBIfam" id="TIGR00453">
    <property type="entry name" value="ispD"/>
    <property type="match status" value="1"/>
</dbReference>
<dbReference type="NCBIfam" id="NF001183">
    <property type="entry name" value="PRK00155.1-3"/>
    <property type="match status" value="1"/>
</dbReference>
<dbReference type="PANTHER" id="PTHR32125">
    <property type="entry name" value="2-C-METHYL-D-ERYTHRITOL 4-PHOSPHATE CYTIDYLYLTRANSFERASE, CHLOROPLASTIC"/>
    <property type="match status" value="1"/>
</dbReference>
<dbReference type="PANTHER" id="PTHR32125:SF4">
    <property type="entry name" value="2-C-METHYL-D-ERYTHRITOL 4-PHOSPHATE CYTIDYLYLTRANSFERASE, CHLOROPLASTIC"/>
    <property type="match status" value="1"/>
</dbReference>
<dbReference type="Pfam" id="PF01128">
    <property type="entry name" value="IspD"/>
    <property type="match status" value="1"/>
</dbReference>
<dbReference type="SUPFAM" id="SSF53448">
    <property type="entry name" value="Nucleotide-diphospho-sugar transferases"/>
    <property type="match status" value="1"/>
</dbReference>
<dbReference type="PROSITE" id="PS01295">
    <property type="entry name" value="ISPD"/>
    <property type="match status" value="1"/>
</dbReference>
<organism>
    <name type="scientific">Clostridium botulinum (strain ATCC 19397 / Type A)</name>
    <dbReference type="NCBI Taxonomy" id="441770"/>
    <lineage>
        <taxon>Bacteria</taxon>
        <taxon>Bacillati</taxon>
        <taxon>Bacillota</taxon>
        <taxon>Clostridia</taxon>
        <taxon>Eubacteriales</taxon>
        <taxon>Clostridiaceae</taxon>
        <taxon>Clostridium</taxon>
    </lineage>
</organism>
<evidence type="ECO:0000255" key="1">
    <source>
        <dbReference type="HAMAP-Rule" id="MF_00108"/>
    </source>
</evidence>